<evidence type="ECO:0000255" key="1">
    <source>
        <dbReference type="HAMAP-Rule" id="MF_00036"/>
    </source>
</evidence>
<comment type="function">
    <text evidence="1">Catalyzes the attachment of alanine to tRNA(Ala) in a two-step reaction: alanine is first activated by ATP to form Ala-AMP and then transferred to the acceptor end of tRNA(Ala). Also edits incorrectly charged Ser-tRNA(Ala) and Gly-tRNA(Ala) via its editing domain.</text>
</comment>
<comment type="catalytic activity">
    <reaction evidence="1">
        <text>tRNA(Ala) + L-alanine + ATP = L-alanyl-tRNA(Ala) + AMP + diphosphate</text>
        <dbReference type="Rhea" id="RHEA:12540"/>
        <dbReference type="Rhea" id="RHEA-COMP:9657"/>
        <dbReference type="Rhea" id="RHEA-COMP:9923"/>
        <dbReference type="ChEBI" id="CHEBI:30616"/>
        <dbReference type="ChEBI" id="CHEBI:33019"/>
        <dbReference type="ChEBI" id="CHEBI:57972"/>
        <dbReference type="ChEBI" id="CHEBI:78442"/>
        <dbReference type="ChEBI" id="CHEBI:78497"/>
        <dbReference type="ChEBI" id="CHEBI:456215"/>
        <dbReference type="EC" id="6.1.1.7"/>
    </reaction>
</comment>
<comment type="cofactor">
    <cofactor evidence="1">
        <name>Zn(2+)</name>
        <dbReference type="ChEBI" id="CHEBI:29105"/>
    </cofactor>
    <text evidence="1">Binds 1 zinc ion per subunit.</text>
</comment>
<comment type="subcellular location">
    <subcellularLocation>
        <location evidence="1">Cytoplasm</location>
    </subcellularLocation>
</comment>
<comment type="domain">
    <text evidence="1">Consists of three domains; the N-terminal catalytic domain, the editing domain and the C-terminal C-Ala domain. The editing domain removes incorrectly charged amino acids, while the C-Ala domain, along with tRNA(Ala), serves as a bridge to cooperatively bring together the editing and aminoacylation centers thus stimulating deacylation of misacylated tRNAs.</text>
</comment>
<comment type="similarity">
    <text evidence="1">Belongs to the class-II aminoacyl-tRNA synthetase family.</text>
</comment>
<reference key="1">
    <citation type="journal article" date="2006" name="J. Bacteriol.">
        <title>Comparative genomic analysis of three strains of Ehrlichia ruminantium reveals an active process of genome size plasticity.</title>
        <authorList>
            <person name="Frutos R."/>
            <person name="Viari A."/>
            <person name="Ferraz C."/>
            <person name="Morgat A."/>
            <person name="Eychenie S."/>
            <person name="Kandassamy Y."/>
            <person name="Chantal I."/>
            <person name="Bensaid A."/>
            <person name="Coissac E."/>
            <person name="Vachiery N."/>
            <person name="Demaille J."/>
            <person name="Martinez D."/>
        </authorList>
    </citation>
    <scope>NUCLEOTIDE SEQUENCE [LARGE SCALE GENOMIC DNA]</scope>
    <source>
        <strain>Gardel</strain>
    </source>
</reference>
<keyword id="KW-0030">Aminoacyl-tRNA synthetase</keyword>
<keyword id="KW-0067">ATP-binding</keyword>
<keyword id="KW-0963">Cytoplasm</keyword>
<keyword id="KW-0436">Ligase</keyword>
<keyword id="KW-0479">Metal-binding</keyword>
<keyword id="KW-0547">Nucleotide-binding</keyword>
<keyword id="KW-0648">Protein biosynthesis</keyword>
<keyword id="KW-0694">RNA-binding</keyword>
<keyword id="KW-0820">tRNA-binding</keyword>
<keyword id="KW-0862">Zinc</keyword>
<name>SYA_EHRRG</name>
<feature type="chain" id="PRO_0000075109" description="Alanine--tRNA ligase">
    <location>
        <begin position="1"/>
        <end position="887"/>
    </location>
</feature>
<feature type="binding site" evidence="1">
    <location>
        <position position="581"/>
    </location>
    <ligand>
        <name>Zn(2+)</name>
        <dbReference type="ChEBI" id="CHEBI:29105"/>
    </ligand>
</feature>
<feature type="binding site" evidence="1">
    <location>
        <position position="585"/>
    </location>
    <ligand>
        <name>Zn(2+)</name>
        <dbReference type="ChEBI" id="CHEBI:29105"/>
    </ligand>
</feature>
<feature type="binding site" evidence="1">
    <location>
        <position position="683"/>
    </location>
    <ligand>
        <name>Zn(2+)</name>
        <dbReference type="ChEBI" id="CHEBI:29105"/>
    </ligand>
</feature>
<feature type="binding site" evidence="1">
    <location>
        <position position="687"/>
    </location>
    <ligand>
        <name>Zn(2+)</name>
        <dbReference type="ChEBI" id="CHEBI:29105"/>
    </ligand>
</feature>
<organism>
    <name type="scientific">Ehrlichia ruminantium (strain Gardel)</name>
    <dbReference type="NCBI Taxonomy" id="302409"/>
    <lineage>
        <taxon>Bacteria</taxon>
        <taxon>Pseudomonadati</taxon>
        <taxon>Pseudomonadota</taxon>
        <taxon>Alphaproteobacteria</taxon>
        <taxon>Rickettsiales</taxon>
        <taxon>Anaplasmataceae</taxon>
        <taxon>Ehrlichia</taxon>
    </lineage>
</organism>
<protein>
    <recommendedName>
        <fullName evidence="1">Alanine--tRNA ligase</fullName>
        <ecNumber evidence="1">6.1.1.7</ecNumber>
    </recommendedName>
    <alternativeName>
        <fullName evidence="1">Alanyl-tRNA synthetase</fullName>
        <shortName evidence="1">AlaRS</shortName>
    </alternativeName>
</protein>
<gene>
    <name evidence="1" type="primary">alaS</name>
    <name type="ordered locus">ERGA_CDS_01420</name>
</gene>
<accession>Q5FH56</accession>
<sequence>MIKHNLVSDLRRLFIDFFVKNGHQFFPSSPLIIKDDPSLLFTNAGMVQFKQIFTSVDGRSINTAVSSQKCLRVGGKHNDLENVGHTNRHHTFFEMLGNFSFGSYFKEHAIELAWNFVIKELALDRKRLYITVYHDDQDAFNLWKKISSFSDDKIIKIKTNDNFWSMGNVGPCGPCSEIFYDYGESVKGGLPGTPEEDGARFTEIWNLVFMEYNRTKEGELSVLPRKCIDTGMGLERIAAVMQGVHDNYDINLFKALIAMSKKESGNSSCEIAHRVIADHVRSAAFLIAEGLTPGNEGRDYILRRIIRRAARYVYMLKYTDSLMYKIFPVLIDETSNAYMADYYPELLKAKDMIISILKTEEENFKDTLVRALPLLEKELTYLSAGDVLSGDVIFRLYDTYGFPVDITLDIIKERGIRFDEKGFYDNMEQQKTRSRLSHLIKSTEQLNGKIWEDIRQNYNNTRFVGYDNFQVQSKILSMVMNNDRNVTVANVGDKVSILMDVTPFYAEAGGQQADTGLLSVVRRDGKDLFGSSNIADVTNTKNIFDGLYIHECIIKSGSLIIGDIVSAEINSHRRKDLCANHSATHLLHYILRMEIDNNIMQKGSLVGNDKLRFDFSYNMALTEKQIKLIENRMCDLIRQNHPVETNICNLQDAMDNGAIALFTEKYDNHEVRVVNIGNSKELCCGTHVKYTGEIGCFKIISESSIACGIRRIEAVTGQYAIDYFRQQEKVLYQVAESVKSPVEDVLVQIDKINRENQELKQKLWAAYFDIIDMQGVNIEKIGNINFLHGTLSGVPIDVVRKFIMKRLVKDMIMLFSNVVNHNRIYVVGVGNSLHSKVKAADFVKIINCVVKSKGGGNAQLAQISTEYIAEVNVIQHIKDELVSIFNA</sequence>
<dbReference type="EC" id="6.1.1.7" evidence="1"/>
<dbReference type="EMBL" id="CR925677">
    <property type="protein sequence ID" value="CAI27594.1"/>
    <property type="molecule type" value="Genomic_DNA"/>
</dbReference>
<dbReference type="RefSeq" id="WP_011255330.1">
    <property type="nucleotide sequence ID" value="NC_006831.1"/>
</dbReference>
<dbReference type="SMR" id="Q5FH56"/>
<dbReference type="KEGG" id="erg:ERGA_CDS_01420"/>
<dbReference type="HOGENOM" id="CLU_004485_1_1_5"/>
<dbReference type="OrthoDB" id="9803884at2"/>
<dbReference type="Proteomes" id="UP000000533">
    <property type="component" value="Chromosome"/>
</dbReference>
<dbReference type="GO" id="GO:0005829">
    <property type="term" value="C:cytosol"/>
    <property type="evidence" value="ECO:0007669"/>
    <property type="project" value="TreeGrafter"/>
</dbReference>
<dbReference type="GO" id="GO:0004813">
    <property type="term" value="F:alanine-tRNA ligase activity"/>
    <property type="evidence" value="ECO:0007669"/>
    <property type="project" value="UniProtKB-UniRule"/>
</dbReference>
<dbReference type="GO" id="GO:0002161">
    <property type="term" value="F:aminoacyl-tRNA deacylase activity"/>
    <property type="evidence" value="ECO:0007669"/>
    <property type="project" value="TreeGrafter"/>
</dbReference>
<dbReference type="GO" id="GO:0005524">
    <property type="term" value="F:ATP binding"/>
    <property type="evidence" value="ECO:0007669"/>
    <property type="project" value="UniProtKB-UniRule"/>
</dbReference>
<dbReference type="GO" id="GO:0000049">
    <property type="term" value="F:tRNA binding"/>
    <property type="evidence" value="ECO:0007669"/>
    <property type="project" value="UniProtKB-KW"/>
</dbReference>
<dbReference type="GO" id="GO:0008270">
    <property type="term" value="F:zinc ion binding"/>
    <property type="evidence" value="ECO:0007669"/>
    <property type="project" value="UniProtKB-UniRule"/>
</dbReference>
<dbReference type="GO" id="GO:0006419">
    <property type="term" value="P:alanyl-tRNA aminoacylation"/>
    <property type="evidence" value="ECO:0007669"/>
    <property type="project" value="UniProtKB-UniRule"/>
</dbReference>
<dbReference type="GO" id="GO:0045892">
    <property type="term" value="P:negative regulation of DNA-templated transcription"/>
    <property type="evidence" value="ECO:0007669"/>
    <property type="project" value="TreeGrafter"/>
</dbReference>
<dbReference type="CDD" id="cd00673">
    <property type="entry name" value="AlaRS_core"/>
    <property type="match status" value="1"/>
</dbReference>
<dbReference type="FunFam" id="3.30.930.10:FF:000004">
    <property type="entry name" value="Alanine--tRNA ligase"/>
    <property type="match status" value="1"/>
</dbReference>
<dbReference type="FunFam" id="3.30.980.10:FF:000004">
    <property type="entry name" value="Alanine--tRNA ligase, cytoplasmic"/>
    <property type="match status" value="1"/>
</dbReference>
<dbReference type="Gene3D" id="2.40.30.130">
    <property type="match status" value="1"/>
</dbReference>
<dbReference type="Gene3D" id="3.10.310.40">
    <property type="match status" value="1"/>
</dbReference>
<dbReference type="Gene3D" id="3.30.54.20">
    <property type="match status" value="1"/>
</dbReference>
<dbReference type="Gene3D" id="3.30.930.10">
    <property type="entry name" value="Bira Bifunctional Protein, Domain 2"/>
    <property type="match status" value="1"/>
</dbReference>
<dbReference type="Gene3D" id="3.30.980.10">
    <property type="entry name" value="Threonyl-trna Synthetase, Chain A, domain 2"/>
    <property type="match status" value="1"/>
</dbReference>
<dbReference type="HAMAP" id="MF_00036_B">
    <property type="entry name" value="Ala_tRNA_synth_B"/>
    <property type="match status" value="1"/>
</dbReference>
<dbReference type="InterPro" id="IPR045864">
    <property type="entry name" value="aa-tRNA-synth_II/BPL/LPL"/>
</dbReference>
<dbReference type="InterPro" id="IPR002318">
    <property type="entry name" value="Ala-tRNA-lgiase_IIc"/>
</dbReference>
<dbReference type="InterPro" id="IPR018162">
    <property type="entry name" value="Ala-tRNA-ligase_IIc_anticod-bd"/>
</dbReference>
<dbReference type="InterPro" id="IPR018165">
    <property type="entry name" value="Ala-tRNA-synth_IIc_core"/>
</dbReference>
<dbReference type="InterPro" id="IPR018164">
    <property type="entry name" value="Ala-tRNA-synth_IIc_N"/>
</dbReference>
<dbReference type="InterPro" id="IPR050058">
    <property type="entry name" value="Ala-tRNA_ligase"/>
</dbReference>
<dbReference type="InterPro" id="IPR023033">
    <property type="entry name" value="Ala_tRNA_ligase_euk/bac"/>
</dbReference>
<dbReference type="InterPro" id="IPR018163">
    <property type="entry name" value="Thr/Ala-tRNA-synth_IIc_edit"/>
</dbReference>
<dbReference type="InterPro" id="IPR009000">
    <property type="entry name" value="Transl_B-barrel_sf"/>
</dbReference>
<dbReference type="InterPro" id="IPR012947">
    <property type="entry name" value="tRNA_SAD"/>
</dbReference>
<dbReference type="NCBIfam" id="TIGR00344">
    <property type="entry name" value="alaS"/>
    <property type="match status" value="1"/>
</dbReference>
<dbReference type="PANTHER" id="PTHR11777:SF9">
    <property type="entry name" value="ALANINE--TRNA LIGASE, CYTOPLASMIC"/>
    <property type="match status" value="1"/>
</dbReference>
<dbReference type="PANTHER" id="PTHR11777">
    <property type="entry name" value="ALANYL-TRNA SYNTHETASE"/>
    <property type="match status" value="1"/>
</dbReference>
<dbReference type="Pfam" id="PF01411">
    <property type="entry name" value="tRNA-synt_2c"/>
    <property type="match status" value="1"/>
</dbReference>
<dbReference type="Pfam" id="PF07973">
    <property type="entry name" value="tRNA_SAD"/>
    <property type="match status" value="1"/>
</dbReference>
<dbReference type="PRINTS" id="PR00980">
    <property type="entry name" value="TRNASYNTHALA"/>
</dbReference>
<dbReference type="SMART" id="SM00863">
    <property type="entry name" value="tRNA_SAD"/>
    <property type="match status" value="1"/>
</dbReference>
<dbReference type="SUPFAM" id="SSF55681">
    <property type="entry name" value="Class II aaRS and biotin synthetases"/>
    <property type="match status" value="1"/>
</dbReference>
<dbReference type="SUPFAM" id="SSF101353">
    <property type="entry name" value="Putative anticodon-binding domain of alanyl-tRNA synthetase (AlaRS)"/>
    <property type="match status" value="1"/>
</dbReference>
<dbReference type="SUPFAM" id="SSF55186">
    <property type="entry name" value="ThrRS/AlaRS common domain"/>
    <property type="match status" value="1"/>
</dbReference>
<dbReference type="SUPFAM" id="SSF50447">
    <property type="entry name" value="Translation proteins"/>
    <property type="match status" value="1"/>
</dbReference>
<dbReference type="PROSITE" id="PS50860">
    <property type="entry name" value="AA_TRNA_LIGASE_II_ALA"/>
    <property type="match status" value="1"/>
</dbReference>
<proteinExistence type="inferred from homology"/>